<protein>
    <recommendedName>
        <fullName>Uncharacterized protein SSP1546</fullName>
    </recommendedName>
</protein>
<organism>
    <name type="scientific">Staphylococcus saprophyticus subsp. saprophyticus (strain ATCC 15305 / DSM 20229 / NCIMB 8711 / NCTC 7292 / S-41)</name>
    <dbReference type="NCBI Taxonomy" id="342451"/>
    <lineage>
        <taxon>Bacteria</taxon>
        <taxon>Bacillati</taxon>
        <taxon>Bacillota</taxon>
        <taxon>Bacilli</taxon>
        <taxon>Bacillales</taxon>
        <taxon>Staphylococcaceae</taxon>
        <taxon>Staphylococcus</taxon>
    </lineage>
</organism>
<evidence type="ECO:0000255" key="1">
    <source>
        <dbReference type="PROSITE-ProRule" id="PRU00813"/>
    </source>
</evidence>
<sequence length="552" mass="60700">MVSKIDGKLFAEMIIQGAQNLSNHADLVDSLNVYPVPDGDTGTNMNLTMTSGREAVENNLSQQIGELGKTFSKGLLMGARGNSGVILSQLFRGFSKSLETYETINAKQFAESFKAGVDTAYKAIMKPVEGTILTVARDAADAAIQKAEETDDCIELMAYILEEAEVSLENTPNLLPVLKEVGVVDSGGKGLAIVYAGFLKALKGETISAQSPKLNKESLVNEEHDFHGVINTEDIVYGYCTEMMVRFGKNKKTFDEQNFREDMSQFGDSLLVINDEEIVKVHVHTEKPGDVFNYGQQYGELIKLKVENMREQHREVVKKEHDGGKAISTEETQAVDTAVIAISMGEGISEIFKSMGATHMISGGQTMNPSTEDIVKIIEQSQCKRAIILPNNKNILMASEQAAEIVEADTIVIPTKSIPQGIAALFNYDETDSLESNKSRMVESLEAVRSGSVTYAVRDTKIDGVEIKKDAFMGLIEDKIVTSHADQFETVKGLMAEMINEDSEIITMIVGMDADKTVTSDIEDWMEATYPDVELEQHDGQQPVYQYLFSVE</sequence>
<name>Y1546_STAS1</name>
<keyword id="KW-1185">Reference proteome</keyword>
<accession>Q49X07</accession>
<proteinExistence type="predicted"/>
<feature type="chain" id="PRO_0000304167" description="Uncharacterized protein SSP1546">
    <location>
        <begin position="1"/>
        <end position="552"/>
    </location>
</feature>
<feature type="domain" description="DhaL" evidence="1">
    <location>
        <begin position="8"/>
        <end position="200"/>
    </location>
</feature>
<reference key="1">
    <citation type="journal article" date="2005" name="Proc. Natl. Acad. Sci. U.S.A.">
        <title>Whole genome sequence of Staphylococcus saprophyticus reveals the pathogenesis of uncomplicated urinary tract infection.</title>
        <authorList>
            <person name="Kuroda M."/>
            <person name="Yamashita A."/>
            <person name="Hirakawa H."/>
            <person name="Kumano M."/>
            <person name="Morikawa K."/>
            <person name="Higashide M."/>
            <person name="Maruyama A."/>
            <person name="Inose Y."/>
            <person name="Matoba K."/>
            <person name="Toh H."/>
            <person name="Kuhara S."/>
            <person name="Hattori M."/>
            <person name="Ohta T."/>
        </authorList>
    </citation>
    <scope>NUCLEOTIDE SEQUENCE [LARGE SCALE GENOMIC DNA]</scope>
    <source>
        <strain>ATCC 15305 / DSM 20229 / NCIMB 8711 / NCTC 7292 / S-41</strain>
    </source>
</reference>
<gene>
    <name type="ordered locus">SSP1546</name>
</gene>
<dbReference type="EMBL" id="AP008934">
    <property type="protein sequence ID" value="BAE18691.1"/>
    <property type="molecule type" value="Genomic_DNA"/>
</dbReference>
<dbReference type="RefSeq" id="WP_011303292.1">
    <property type="nucleotide sequence ID" value="NC_007350.1"/>
</dbReference>
<dbReference type="SMR" id="Q49X07"/>
<dbReference type="GeneID" id="3615192"/>
<dbReference type="KEGG" id="ssp:SSP1546"/>
<dbReference type="PATRIC" id="fig|342451.11.peg.1548"/>
<dbReference type="eggNOG" id="COG1461">
    <property type="taxonomic scope" value="Bacteria"/>
</dbReference>
<dbReference type="HOGENOM" id="CLU_017496_1_0_9"/>
<dbReference type="OrthoDB" id="9760324at2"/>
<dbReference type="Proteomes" id="UP000006371">
    <property type="component" value="Chromosome"/>
</dbReference>
<dbReference type="GO" id="GO:0004371">
    <property type="term" value="F:glycerone kinase activity"/>
    <property type="evidence" value="ECO:0007669"/>
    <property type="project" value="InterPro"/>
</dbReference>
<dbReference type="GO" id="GO:0006071">
    <property type="term" value="P:glycerol metabolic process"/>
    <property type="evidence" value="ECO:0007669"/>
    <property type="project" value="InterPro"/>
</dbReference>
<dbReference type="Gene3D" id="1.25.40.340">
    <property type="match status" value="1"/>
</dbReference>
<dbReference type="InterPro" id="IPR050270">
    <property type="entry name" value="DegV_domain_contain"/>
</dbReference>
<dbReference type="InterPro" id="IPR004007">
    <property type="entry name" value="DhaL_dom"/>
</dbReference>
<dbReference type="InterPro" id="IPR036117">
    <property type="entry name" value="DhaL_dom_sf"/>
</dbReference>
<dbReference type="InterPro" id="IPR033470">
    <property type="entry name" value="FakA-like_C"/>
</dbReference>
<dbReference type="InterPro" id="IPR048394">
    <property type="entry name" value="FakA-like_M"/>
</dbReference>
<dbReference type="InterPro" id="IPR019986">
    <property type="entry name" value="YloV-like"/>
</dbReference>
<dbReference type="NCBIfam" id="NF038248">
    <property type="entry name" value="FakA_VfrB"/>
    <property type="match status" value="1"/>
</dbReference>
<dbReference type="NCBIfam" id="TIGR03599">
    <property type="entry name" value="YloV"/>
    <property type="match status" value="1"/>
</dbReference>
<dbReference type="PANTHER" id="PTHR33434">
    <property type="entry name" value="DEGV DOMAIN-CONTAINING PROTEIN DR_1986-RELATED"/>
    <property type="match status" value="1"/>
</dbReference>
<dbReference type="PANTHER" id="PTHR33434:SF4">
    <property type="entry name" value="PHOSPHATASE PROTEIN"/>
    <property type="match status" value="1"/>
</dbReference>
<dbReference type="Pfam" id="PF02734">
    <property type="entry name" value="Dak2"/>
    <property type="match status" value="1"/>
</dbReference>
<dbReference type="Pfam" id="PF13684">
    <property type="entry name" value="FakA-like_C"/>
    <property type="match status" value="1"/>
</dbReference>
<dbReference type="Pfam" id="PF21645">
    <property type="entry name" value="FakA-like_M"/>
    <property type="match status" value="1"/>
</dbReference>
<dbReference type="SMART" id="SM01121">
    <property type="entry name" value="Dak1_2"/>
    <property type="match status" value="1"/>
</dbReference>
<dbReference type="SMART" id="SM01120">
    <property type="entry name" value="Dak2"/>
    <property type="match status" value="1"/>
</dbReference>
<dbReference type="SUPFAM" id="SSF101473">
    <property type="entry name" value="DhaL-like"/>
    <property type="match status" value="1"/>
</dbReference>
<dbReference type="PROSITE" id="PS51480">
    <property type="entry name" value="DHAL"/>
    <property type="match status" value="1"/>
</dbReference>